<proteinExistence type="inferred from homology"/>
<comment type="function">
    <text evidence="1">Probable transcription regulator that acts as a developmental regulator by promoting cell growth in response to light.</text>
</comment>
<comment type="subcellular location">
    <subcellularLocation>
        <location evidence="1">Nucleus</location>
    </subcellularLocation>
</comment>
<comment type="similarity">
    <text evidence="4">Belongs to the plant homeotic and developmental regulators ALOG protein family.</text>
</comment>
<organism>
    <name type="scientific">Oryza sativa subsp. indica</name>
    <name type="common">Rice</name>
    <dbReference type="NCBI Taxonomy" id="39946"/>
    <lineage>
        <taxon>Eukaryota</taxon>
        <taxon>Viridiplantae</taxon>
        <taxon>Streptophyta</taxon>
        <taxon>Embryophyta</taxon>
        <taxon>Tracheophyta</taxon>
        <taxon>Spermatophyta</taxon>
        <taxon>Magnoliopsida</taxon>
        <taxon>Liliopsida</taxon>
        <taxon>Poales</taxon>
        <taxon>Poaceae</taxon>
        <taxon>BOP clade</taxon>
        <taxon>Oryzoideae</taxon>
        <taxon>Oryzeae</taxon>
        <taxon>Oryzinae</taxon>
        <taxon>Oryza</taxon>
        <taxon>Oryza sativa</taxon>
    </lineage>
</organism>
<feature type="chain" id="PRO_0000425313" description="Protein G1-like8">
    <location>
        <begin position="1"/>
        <end position="239"/>
    </location>
</feature>
<feature type="domain" description="ALOG" evidence="2">
    <location>
        <begin position="32"/>
        <end position="159"/>
    </location>
</feature>
<feature type="region of interest" description="Disordered" evidence="3">
    <location>
        <begin position="1"/>
        <end position="35"/>
    </location>
</feature>
<feature type="region of interest" description="Disordered" evidence="3">
    <location>
        <begin position="149"/>
        <end position="239"/>
    </location>
</feature>
<feature type="short sequence motif" description="Nuclear localization signal" evidence="1">
    <location>
        <begin position="157"/>
        <end position="161"/>
    </location>
</feature>
<feature type="compositionally biased region" description="Low complexity" evidence="3">
    <location>
        <begin position="9"/>
        <end position="29"/>
    </location>
</feature>
<feature type="compositionally biased region" description="Pro residues" evidence="3">
    <location>
        <begin position="167"/>
        <end position="178"/>
    </location>
</feature>
<feature type="compositionally biased region" description="Low complexity" evidence="3">
    <location>
        <begin position="179"/>
        <end position="215"/>
    </location>
</feature>
<feature type="compositionally biased region" description="Low complexity" evidence="3">
    <location>
        <begin position="223"/>
        <end position="239"/>
    </location>
</feature>
<dbReference type="EMBL" id="CM000130">
    <property type="protein sequence ID" value="EAY98390.1"/>
    <property type="molecule type" value="Genomic_DNA"/>
</dbReference>
<dbReference type="SMR" id="A2Y5N0"/>
<dbReference type="STRING" id="39946.A2Y5N0"/>
<dbReference type="EnsemblPlants" id="BGIOSGA020029-TA">
    <property type="protein sequence ID" value="BGIOSGA020029-PA"/>
    <property type="gene ID" value="BGIOSGA020029"/>
</dbReference>
<dbReference type="EnsemblPlants" id="OsGoSa_05g0020330.01">
    <property type="protein sequence ID" value="OsGoSa_05g0020330.01"/>
    <property type="gene ID" value="OsGoSa_05g0020330"/>
</dbReference>
<dbReference type="EnsemblPlants" id="OsLaMu_05g0020420.01">
    <property type="protein sequence ID" value="OsLaMu_05g0020420.01"/>
    <property type="gene ID" value="OsLaMu_05g0020420"/>
</dbReference>
<dbReference type="EnsemblPlants" id="OsLiXu_05g0020410.01">
    <property type="protein sequence ID" value="OsLiXu_05g0020410.01"/>
    <property type="gene ID" value="OsLiXu_05g0020410"/>
</dbReference>
<dbReference type="EnsemblPlants" id="OsMH63_05G020450_01">
    <property type="protein sequence ID" value="OsMH63_05G020450_01"/>
    <property type="gene ID" value="OsMH63_05G020450"/>
</dbReference>
<dbReference type="EnsemblPlants" id="OsPr106_05g0020450.01">
    <property type="protein sequence ID" value="OsPr106_05g0020450.01"/>
    <property type="gene ID" value="OsPr106_05g0020450"/>
</dbReference>
<dbReference type="EnsemblPlants" id="OsZS97_05G020640_01">
    <property type="protein sequence ID" value="OsZS97_05G020640_01"/>
    <property type="gene ID" value="OsZS97_05G020640"/>
</dbReference>
<dbReference type="Gramene" id="BGIOSGA020029-TA">
    <property type="protein sequence ID" value="BGIOSGA020029-PA"/>
    <property type="gene ID" value="BGIOSGA020029"/>
</dbReference>
<dbReference type="Gramene" id="OsGoSa_05g0020330.01">
    <property type="protein sequence ID" value="OsGoSa_05g0020330.01"/>
    <property type="gene ID" value="OsGoSa_05g0020330"/>
</dbReference>
<dbReference type="Gramene" id="OsLaMu_05g0020420.01">
    <property type="protein sequence ID" value="OsLaMu_05g0020420.01"/>
    <property type="gene ID" value="OsLaMu_05g0020420"/>
</dbReference>
<dbReference type="Gramene" id="OsLiXu_05g0020410.01">
    <property type="protein sequence ID" value="OsLiXu_05g0020410.01"/>
    <property type="gene ID" value="OsLiXu_05g0020410"/>
</dbReference>
<dbReference type="Gramene" id="OsMH63_05G020450_01">
    <property type="protein sequence ID" value="OsMH63_05G020450_01"/>
    <property type="gene ID" value="OsMH63_05G020450"/>
</dbReference>
<dbReference type="Gramene" id="OsPr106_05g0020450.01">
    <property type="protein sequence ID" value="OsPr106_05g0020450.01"/>
    <property type="gene ID" value="OsPr106_05g0020450"/>
</dbReference>
<dbReference type="Gramene" id="OsZS97_05G020640_01">
    <property type="protein sequence ID" value="OsZS97_05G020640_01"/>
    <property type="gene ID" value="OsZS97_05G020640"/>
</dbReference>
<dbReference type="HOGENOM" id="CLU_071168_2_1_1"/>
<dbReference type="OMA" id="PYFGHAN"/>
<dbReference type="OrthoDB" id="1906822at2759"/>
<dbReference type="Proteomes" id="UP000007015">
    <property type="component" value="Chromosome 5"/>
</dbReference>
<dbReference type="GO" id="GO:0005634">
    <property type="term" value="C:nucleus"/>
    <property type="evidence" value="ECO:0000250"/>
    <property type="project" value="UniProtKB"/>
</dbReference>
<dbReference type="GO" id="GO:0003677">
    <property type="term" value="F:DNA binding"/>
    <property type="evidence" value="ECO:0007669"/>
    <property type="project" value="UniProtKB-KW"/>
</dbReference>
<dbReference type="GO" id="GO:0009299">
    <property type="term" value="P:mRNA transcription"/>
    <property type="evidence" value="ECO:0000250"/>
    <property type="project" value="UniProtKB"/>
</dbReference>
<dbReference type="GO" id="GO:0090698">
    <property type="term" value="P:post-embryonic plant morphogenesis"/>
    <property type="evidence" value="ECO:0000250"/>
    <property type="project" value="UniProtKB"/>
</dbReference>
<dbReference type="GO" id="GO:0009416">
    <property type="term" value="P:response to light stimulus"/>
    <property type="evidence" value="ECO:0007669"/>
    <property type="project" value="TreeGrafter"/>
</dbReference>
<dbReference type="InterPro" id="IPR040222">
    <property type="entry name" value="ALOG"/>
</dbReference>
<dbReference type="InterPro" id="IPR006936">
    <property type="entry name" value="ALOG_dom"/>
</dbReference>
<dbReference type="PANTHER" id="PTHR31165">
    <property type="entry name" value="PROTEIN G1-LIKE2"/>
    <property type="match status" value="1"/>
</dbReference>
<dbReference type="PANTHER" id="PTHR31165:SF18">
    <property type="entry name" value="PROTEIN G1-LIKE8"/>
    <property type="match status" value="1"/>
</dbReference>
<dbReference type="Pfam" id="PF04852">
    <property type="entry name" value="ALOG_dom"/>
    <property type="match status" value="1"/>
</dbReference>
<dbReference type="PROSITE" id="PS51697">
    <property type="entry name" value="ALOG"/>
    <property type="match status" value="1"/>
</dbReference>
<keyword id="KW-0217">Developmental protein</keyword>
<keyword id="KW-0238">DNA-binding</keyword>
<keyword id="KW-0539">Nucleus</keyword>
<keyword id="KW-1185">Reference proteome</keyword>
<keyword id="KW-0804">Transcription</keyword>
<keyword id="KW-0805">Transcription regulation</keyword>
<sequence length="239" mass="24987">MEGGGGGADAQAQAQPVAQAPPAMQPMQQLSRYESQKRRDWNTFLQYLRNHRPPLTLARCSGAHVIEFLKYLDQFGKTKVHASGCAYYGQPSPPAPCPCPLRQAWGSLDALIGRLRAAYEESGHAPESNPFAARAVRIYLREVRDAQAKARGIPYEKKKRKRTQQQQPPPQPPLPPQHQPGAAAGEASSSSSAAAAAVAAEGSGSSAATAAATSQTGGGGGSTTTTTASAAAPTTATRV</sequence>
<reference key="1">
    <citation type="journal article" date="2005" name="PLoS Biol.">
        <title>The genomes of Oryza sativa: a history of duplications.</title>
        <authorList>
            <person name="Yu J."/>
            <person name="Wang J."/>
            <person name="Lin W."/>
            <person name="Li S."/>
            <person name="Li H."/>
            <person name="Zhou J."/>
            <person name="Ni P."/>
            <person name="Dong W."/>
            <person name="Hu S."/>
            <person name="Zeng C."/>
            <person name="Zhang J."/>
            <person name="Zhang Y."/>
            <person name="Li R."/>
            <person name="Xu Z."/>
            <person name="Li S."/>
            <person name="Li X."/>
            <person name="Zheng H."/>
            <person name="Cong L."/>
            <person name="Lin L."/>
            <person name="Yin J."/>
            <person name="Geng J."/>
            <person name="Li G."/>
            <person name="Shi J."/>
            <person name="Liu J."/>
            <person name="Lv H."/>
            <person name="Li J."/>
            <person name="Wang J."/>
            <person name="Deng Y."/>
            <person name="Ran L."/>
            <person name="Shi X."/>
            <person name="Wang X."/>
            <person name="Wu Q."/>
            <person name="Li C."/>
            <person name="Ren X."/>
            <person name="Wang J."/>
            <person name="Wang X."/>
            <person name="Li D."/>
            <person name="Liu D."/>
            <person name="Zhang X."/>
            <person name="Ji Z."/>
            <person name="Zhao W."/>
            <person name="Sun Y."/>
            <person name="Zhang Z."/>
            <person name="Bao J."/>
            <person name="Han Y."/>
            <person name="Dong L."/>
            <person name="Ji J."/>
            <person name="Chen P."/>
            <person name="Wu S."/>
            <person name="Liu J."/>
            <person name="Xiao Y."/>
            <person name="Bu D."/>
            <person name="Tan J."/>
            <person name="Yang L."/>
            <person name="Ye C."/>
            <person name="Zhang J."/>
            <person name="Xu J."/>
            <person name="Zhou Y."/>
            <person name="Yu Y."/>
            <person name="Zhang B."/>
            <person name="Zhuang S."/>
            <person name="Wei H."/>
            <person name="Liu B."/>
            <person name="Lei M."/>
            <person name="Yu H."/>
            <person name="Li Y."/>
            <person name="Xu H."/>
            <person name="Wei S."/>
            <person name="He X."/>
            <person name="Fang L."/>
            <person name="Zhang Z."/>
            <person name="Zhang Y."/>
            <person name="Huang X."/>
            <person name="Su Z."/>
            <person name="Tong W."/>
            <person name="Li J."/>
            <person name="Tong Z."/>
            <person name="Li S."/>
            <person name="Ye J."/>
            <person name="Wang L."/>
            <person name="Fang L."/>
            <person name="Lei T."/>
            <person name="Chen C.-S."/>
            <person name="Chen H.-C."/>
            <person name="Xu Z."/>
            <person name="Li H."/>
            <person name="Huang H."/>
            <person name="Zhang F."/>
            <person name="Xu H."/>
            <person name="Li N."/>
            <person name="Zhao C."/>
            <person name="Li S."/>
            <person name="Dong L."/>
            <person name="Huang Y."/>
            <person name="Li L."/>
            <person name="Xi Y."/>
            <person name="Qi Q."/>
            <person name="Li W."/>
            <person name="Zhang B."/>
            <person name="Hu W."/>
            <person name="Zhang Y."/>
            <person name="Tian X."/>
            <person name="Jiao Y."/>
            <person name="Liang X."/>
            <person name="Jin J."/>
            <person name="Gao L."/>
            <person name="Zheng W."/>
            <person name="Hao B."/>
            <person name="Liu S.-M."/>
            <person name="Wang W."/>
            <person name="Yuan L."/>
            <person name="Cao M."/>
            <person name="McDermott J."/>
            <person name="Samudrala R."/>
            <person name="Wang J."/>
            <person name="Wong G.K.-S."/>
            <person name="Yang H."/>
        </authorList>
    </citation>
    <scope>NUCLEOTIDE SEQUENCE [LARGE SCALE GENOMIC DNA]</scope>
    <source>
        <strain>cv. 93-11</strain>
    </source>
</reference>
<protein>
    <recommendedName>
        <fullName>Protein G1-like8</fullName>
    </recommendedName>
</protein>
<accession>A2Y5N0</accession>
<gene>
    <name type="ORF">OsI_20303</name>
</gene>
<name>G1L8_ORYSI</name>
<evidence type="ECO:0000250" key="1"/>
<evidence type="ECO:0000255" key="2">
    <source>
        <dbReference type="PROSITE-ProRule" id="PRU01033"/>
    </source>
</evidence>
<evidence type="ECO:0000256" key="3">
    <source>
        <dbReference type="SAM" id="MobiDB-lite"/>
    </source>
</evidence>
<evidence type="ECO:0000305" key="4"/>